<protein>
    <recommendedName>
        <fullName evidence="15">Galactolipid galactosyltransferase SFR2, chloroplastic</fullName>
        <ecNumber evidence="9 10">2.4.1.184</ecNumber>
    </recommendedName>
    <alternativeName>
        <fullName evidence="13">Galactolipid:galactolipid galactosyltransferase</fullName>
        <shortName evidence="13">GGGT</shortName>
    </alternativeName>
    <alternativeName>
        <fullName evidence="12">Protein SENSITIVE TO FREEZING 2</fullName>
        <shortName evidence="12">AtSFR2</shortName>
    </alternativeName>
</protein>
<comment type="function">
    <text evidence="6 7 8 9 10">Glycosyl hydrolase family protein acting primarily as a highly specific galactosyltransferase (PubMed:25100720). Synthesizes digalactosyldiacylglycerol from monogalactosyldiacylglycerol in the absence of UDP-galactose in vitro (PubMed:14600212). Hydrolyzes o- and p-nitrophenyl beta-D-glucoside in vitro (PubMed:15258268). Plays a role in freezing tolerance (PubMed:15258268, PubMed:18466306, PubMed:20798281). May play a role in chloroplast protection (PubMed:18466306).</text>
</comment>
<comment type="catalytic activity">
    <reaction evidence="9 10">
        <text>2 a 1,2-diacyl-3-O-(beta-D-galactosyl)-sn-glycerol = a 1,2-diacyl-3-O-[beta-D-galactosyl-(1-&gt;6)-beta-D-galactosyl]-sn-glycerol + a 1,2-diacyl-sn-glycerol</text>
        <dbReference type="Rhea" id="RHEA:15921"/>
        <dbReference type="ChEBI" id="CHEBI:17615"/>
        <dbReference type="ChEBI" id="CHEBI:17815"/>
        <dbReference type="ChEBI" id="CHEBI:87082"/>
        <dbReference type="EC" id="2.4.1.184"/>
    </reaction>
</comment>
<comment type="activity regulation">
    <text evidence="9">Induced by MgCl(2).</text>
</comment>
<comment type="biophysicochemical properties">
    <phDependence>
        <text evidence="10">Optimum pH is 7.5.</text>
    </phDependence>
    <temperatureDependence>
        <text evidence="10">Optimum temperature is 24 degrees Celsius.</text>
    </temperatureDependence>
</comment>
<comment type="subcellular location">
    <subcellularLocation>
        <location evidence="6">Plastid</location>
        <location evidence="6">Chloroplast</location>
    </subcellularLocation>
    <subcellularLocation>
        <location evidence="8 10">Plastid</location>
        <location evidence="8 10">Chloroplast outer membrane</location>
        <topology evidence="10">Single-pass type II membrane protein</topology>
    </subcellularLocation>
</comment>
<comment type="alternative products">
    <event type="alternative splicing"/>
    <isoform>
        <id>Q93Y07-1</id>
        <name>1</name>
        <sequence type="displayed"/>
    </isoform>
    <isoform>
        <id>Q93Y07-2</id>
        <name>2</name>
        <sequence type="described" ref="VSP_038516"/>
    </isoform>
</comment>
<comment type="tissue specificity">
    <text evidence="7">Expressed in hypocotyls, cotyledons, stems, leaves, pedicels, sepals, anthers and pistils. Limited expression in roots. Not detected in petals or filaments.</text>
</comment>
<comment type="induction">
    <text evidence="7">Not induced by cold, dehydration, salt or abscisic acid.</text>
</comment>
<comment type="disruption phenotype">
    <text evidence="7 9">Sensitive to freezing (PubMed:15258268, PubMed:20798281). Loss of tri- and tetragalactosyldiacylglycerol accumulation during freezing (PubMed:20798281).</text>
</comment>
<comment type="similarity">
    <text evidence="14">Belongs to the glycosyl hydrolase 1 family.</text>
</comment>
<comment type="sequence caution" evidence="14">
    <conflict type="erroneous gene model prediction">
        <sequence resource="EMBL-CDS" id="AAG51335"/>
    </conflict>
</comment>
<accession>Q93Y07</accession>
<accession>Q8LAN2</accession>
<accession>Q8LGU4</accession>
<accession>Q8LGU5</accession>
<accession>Q8W578</accession>
<accession>Q9C8Z2</accession>
<accession>Q9SDL5</accession>
<dbReference type="EC" id="2.4.1.184" evidence="9 10"/>
<dbReference type="EMBL" id="AJ491320">
    <property type="protein sequence ID" value="CAD36512.1"/>
    <property type="molecule type" value="mRNA"/>
</dbReference>
<dbReference type="EMBL" id="AJ491321">
    <property type="protein sequence ID" value="CAD36513.1"/>
    <property type="molecule type" value="mRNA"/>
</dbReference>
<dbReference type="EMBL" id="AJ491322">
    <property type="protein sequence ID" value="CAD36514.1"/>
    <property type="molecule type" value="mRNA"/>
</dbReference>
<dbReference type="EMBL" id="AC020580">
    <property type="protein sequence ID" value="AAG51335.1"/>
    <property type="status" value="ALT_SEQ"/>
    <property type="molecule type" value="Genomic_DNA"/>
</dbReference>
<dbReference type="EMBL" id="CP002686">
    <property type="protein sequence ID" value="AEE74404.1"/>
    <property type="molecule type" value="Genomic_DNA"/>
</dbReference>
<dbReference type="EMBL" id="CP002686">
    <property type="protein sequence ID" value="AEE74405.1"/>
    <property type="molecule type" value="Genomic_DNA"/>
</dbReference>
<dbReference type="EMBL" id="AF419582">
    <property type="protein sequence ID" value="AAL31914.1"/>
    <property type="molecule type" value="mRNA"/>
</dbReference>
<dbReference type="EMBL" id="AY059889">
    <property type="protein sequence ID" value="AAL24371.1"/>
    <property type="molecule type" value="mRNA"/>
</dbReference>
<dbReference type="EMBL" id="BT002100">
    <property type="protein sequence ID" value="AAN72111.1"/>
    <property type="molecule type" value="mRNA"/>
</dbReference>
<dbReference type="EMBL" id="AY087713">
    <property type="protein sequence ID" value="AAM65250.1"/>
    <property type="molecule type" value="mRNA"/>
</dbReference>
<dbReference type="EMBL" id="AF219380">
    <property type="protein sequence ID" value="AAF23823.1"/>
    <property type="molecule type" value="mRNA"/>
</dbReference>
<dbReference type="RefSeq" id="NP_001118591.1">
    <molecule id="Q93Y07-2"/>
    <property type="nucleotide sequence ID" value="NM_001125119.2"/>
</dbReference>
<dbReference type="RefSeq" id="NP_566285.1">
    <molecule id="Q93Y07-1"/>
    <property type="nucleotide sequence ID" value="NM_111527.3"/>
</dbReference>
<dbReference type="SMR" id="Q93Y07"/>
<dbReference type="BioGRID" id="5164">
    <property type="interactions" value="1"/>
</dbReference>
<dbReference type="FunCoup" id="Q93Y07">
    <property type="interactions" value="295"/>
</dbReference>
<dbReference type="STRING" id="3702.Q93Y07"/>
<dbReference type="SwissLipids" id="SLP:000001450"/>
<dbReference type="CAZy" id="GH1">
    <property type="family name" value="Glycoside Hydrolase Family 1"/>
</dbReference>
<dbReference type="PaxDb" id="3702-AT3G06510.2"/>
<dbReference type="ProteomicsDB" id="234557">
    <molecule id="Q93Y07-1"/>
</dbReference>
<dbReference type="EnsemblPlants" id="AT3G06510.1">
    <molecule id="Q93Y07-1"/>
    <property type="protein sequence ID" value="AT3G06510.1"/>
    <property type="gene ID" value="AT3G06510"/>
</dbReference>
<dbReference type="EnsemblPlants" id="AT3G06510.2">
    <molecule id="Q93Y07-2"/>
    <property type="protein sequence ID" value="AT3G06510.2"/>
    <property type="gene ID" value="AT3G06510"/>
</dbReference>
<dbReference type="GeneID" id="819829"/>
<dbReference type="Gramene" id="AT3G06510.1">
    <molecule id="Q93Y07-1"/>
    <property type="protein sequence ID" value="AT3G06510.1"/>
    <property type="gene ID" value="AT3G06510"/>
</dbReference>
<dbReference type="Gramene" id="AT3G06510.2">
    <molecule id="Q93Y07-2"/>
    <property type="protein sequence ID" value="AT3G06510.2"/>
    <property type="gene ID" value="AT3G06510"/>
</dbReference>
<dbReference type="KEGG" id="ath:AT3G06510"/>
<dbReference type="Araport" id="AT3G06510"/>
<dbReference type="TAIR" id="AT3G06510">
    <property type="gene designation" value="SFR2"/>
</dbReference>
<dbReference type="eggNOG" id="KOG0626">
    <property type="taxonomic scope" value="Eukaryota"/>
</dbReference>
<dbReference type="InParanoid" id="Q93Y07"/>
<dbReference type="OMA" id="ETSCDDN"/>
<dbReference type="OrthoDB" id="65569at2759"/>
<dbReference type="PhylomeDB" id="Q93Y07"/>
<dbReference type="BioCyc" id="ARA:AT3G06510-MONOMER"/>
<dbReference type="BioCyc" id="MetaCyc:AT3G06510-MONOMER"/>
<dbReference type="PRO" id="PR:Q93Y07"/>
<dbReference type="Proteomes" id="UP000006548">
    <property type="component" value="Chromosome 3"/>
</dbReference>
<dbReference type="ExpressionAtlas" id="Q93Y07">
    <property type="expression patterns" value="baseline and differential"/>
</dbReference>
<dbReference type="GO" id="GO:0009507">
    <property type="term" value="C:chloroplast"/>
    <property type="evidence" value="ECO:0007005"/>
    <property type="project" value="TAIR"/>
</dbReference>
<dbReference type="GO" id="GO:0009941">
    <property type="term" value="C:chloroplast envelope"/>
    <property type="evidence" value="ECO:0000314"/>
    <property type="project" value="TAIR"/>
</dbReference>
<dbReference type="GO" id="GO:0009707">
    <property type="term" value="C:chloroplast outer membrane"/>
    <property type="evidence" value="ECO:0000314"/>
    <property type="project" value="UniProtKB"/>
</dbReference>
<dbReference type="GO" id="GO:0005829">
    <property type="term" value="C:cytosol"/>
    <property type="evidence" value="ECO:0007005"/>
    <property type="project" value="TAIR"/>
</dbReference>
<dbReference type="GO" id="GO:0009536">
    <property type="term" value="C:plastid"/>
    <property type="evidence" value="ECO:0007005"/>
    <property type="project" value="TAIR"/>
</dbReference>
<dbReference type="GO" id="GO:0008422">
    <property type="term" value="F:beta-glucosidase activity"/>
    <property type="evidence" value="ECO:0000314"/>
    <property type="project" value="UniProtKB"/>
</dbReference>
<dbReference type="GO" id="GO:0080079">
    <property type="term" value="F:cellobiose glucosidase activity"/>
    <property type="evidence" value="ECO:0000314"/>
    <property type="project" value="UniProtKB"/>
</dbReference>
<dbReference type="GO" id="GO:0046480">
    <property type="term" value="F:galactolipid galactosyltransferase activity"/>
    <property type="evidence" value="ECO:0007669"/>
    <property type="project" value="UniProtKB-EC"/>
</dbReference>
<dbReference type="GO" id="GO:0008378">
    <property type="term" value="F:galactosyltransferase activity"/>
    <property type="evidence" value="ECO:0000314"/>
    <property type="project" value="TAIR"/>
</dbReference>
<dbReference type="GO" id="GO:0016757">
    <property type="term" value="F:glycosyltransferase activity"/>
    <property type="evidence" value="ECO:0000314"/>
    <property type="project" value="TAIR"/>
</dbReference>
<dbReference type="GO" id="GO:0005975">
    <property type="term" value="P:carbohydrate metabolic process"/>
    <property type="evidence" value="ECO:0007669"/>
    <property type="project" value="InterPro"/>
</dbReference>
<dbReference type="GO" id="GO:0009409">
    <property type="term" value="P:response to cold"/>
    <property type="evidence" value="ECO:0000315"/>
    <property type="project" value="UniProtKB"/>
</dbReference>
<dbReference type="GO" id="GO:0050826">
    <property type="term" value="P:response to freezing"/>
    <property type="evidence" value="ECO:0000315"/>
    <property type="project" value="TAIR"/>
</dbReference>
<dbReference type="FunFam" id="3.20.20.80:FF:000302">
    <property type="entry name" value="Galactolipid galactosyltransferase SFR2, chloroplastic"/>
    <property type="match status" value="1"/>
</dbReference>
<dbReference type="Gene3D" id="3.20.20.80">
    <property type="entry name" value="Glycosidases"/>
    <property type="match status" value="1"/>
</dbReference>
<dbReference type="InterPro" id="IPR001360">
    <property type="entry name" value="Glyco_hydro_1"/>
</dbReference>
<dbReference type="InterPro" id="IPR018120">
    <property type="entry name" value="Glyco_hydro_1_AS"/>
</dbReference>
<dbReference type="InterPro" id="IPR017853">
    <property type="entry name" value="Glycoside_hydrolase_SF"/>
</dbReference>
<dbReference type="PANTHER" id="PTHR10353:SF209">
    <property type="entry name" value="GALACTOLIPID GALACTOSYLTRANSFERASE SFR2, CHLOROPLASTIC"/>
    <property type="match status" value="1"/>
</dbReference>
<dbReference type="PANTHER" id="PTHR10353">
    <property type="entry name" value="GLYCOSYL HYDROLASE"/>
    <property type="match status" value="1"/>
</dbReference>
<dbReference type="Pfam" id="PF00232">
    <property type="entry name" value="Glyco_hydro_1"/>
    <property type="match status" value="2"/>
</dbReference>
<dbReference type="PRINTS" id="PR00131">
    <property type="entry name" value="GLHYDRLASE1"/>
</dbReference>
<dbReference type="SUPFAM" id="SSF51445">
    <property type="entry name" value="(Trans)glycosidases"/>
    <property type="match status" value="1"/>
</dbReference>
<dbReference type="PROSITE" id="PS00572">
    <property type="entry name" value="GLYCOSYL_HYDROL_F1_1"/>
    <property type="match status" value="1"/>
</dbReference>
<keyword id="KW-0025">Alternative splicing</keyword>
<keyword id="KW-0150">Chloroplast</keyword>
<keyword id="KW-0326">Glycosidase</keyword>
<keyword id="KW-0378">Hydrolase</keyword>
<keyword id="KW-0472">Membrane</keyword>
<keyword id="KW-0934">Plastid</keyword>
<keyword id="KW-1002">Plastid outer membrane</keyword>
<keyword id="KW-1185">Reference proteome</keyword>
<keyword id="KW-0735">Signal-anchor</keyword>
<keyword id="KW-0808">Transferase</keyword>
<keyword id="KW-0812">Transmembrane</keyword>
<keyword id="KW-1133">Transmembrane helix</keyword>
<sequence length="622" mass="70779">MELFALLIKVAGLLATVTVGANVVSYSRFRRQNLAKFRSPIDESKEVLADFNSIEHEEGKFFFGLATAPAHAEDDLDDAWLQFAKETPCSAEEAEAADKKARRKKVKLAVGAITKGLAKNTHGKEDKNAADKPPSKNVAAWHNAPHAEDRLKFWSDPDKEVKLAKDTGVTVFRMGVDWSRIMPVEPTKGIKEAVNYEAVEHYKWILKKVRSNGMKVMLTLFHHSLPPWAADYGGWKMEKTVDYFMDFTRIVVDSMYDLVDSWVTFNEPHIFTMLTYMCGSWPGNNPDFLEIATSTLPMGVFHRALHWMAVAHSKAYDYIHGKISLKKPLVGVAHHVSFMRPYGLFDIGAVTISNSLTIFPYIDSICEKLDFIGINYYGQEAVCGAGLKLVETDEYSESGRGVYPDGLYRVLLMFHERYKHLKVPFIVTENGVSDETDVIRRPYLIEHLLALYAAMLKGVPVLGYIFWTISDNWEWADGYGPKFGLVAVDRSHDLARTLRQSYHLFSKIVKSGKVTRKDRSLAWNELQKAAKAGKLRPFYRGVDNHNLMYADGLDKPQWRPFVDRDWRFGHYQMDGLQDPLSRVARTLLIWPLIMKKRIRKVKIKHTDDAGLVLHPALASPFD</sequence>
<proteinExistence type="evidence at protein level"/>
<gene>
    <name evidence="12" type="primary">SFR2</name>
    <name evidence="16" type="ordered locus">At3g06510</name>
    <name evidence="17" type="ORF">F5E6.16</name>
</gene>
<organism>
    <name type="scientific">Arabidopsis thaliana</name>
    <name type="common">Mouse-ear cress</name>
    <dbReference type="NCBI Taxonomy" id="3702"/>
    <lineage>
        <taxon>Eukaryota</taxon>
        <taxon>Viridiplantae</taxon>
        <taxon>Streptophyta</taxon>
        <taxon>Embryophyta</taxon>
        <taxon>Tracheophyta</taxon>
        <taxon>Spermatophyta</taxon>
        <taxon>Magnoliopsida</taxon>
        <taxon>eudicotyledons</taxon>
        <taxon>Gunneridae</taxon>
        <taxon>Pentapetalae</taxon>
        <taxon>rosids</taxon>
        <taxon>malvids</taxon>
        <taxon>Brassicales</taxon>
        <taxon>Brassicaceae</taxon>
        <taxon>Camelineae</taxon>
        <taxon>Arabidopsis</taxon>
    </lineage>
</organism>
<reference key="1">
    <citation type="journal article" date="2004" name="Plant Cell">
        <title>The SENSITIVE TO FREEZING2 gene, required for freezing tolerance in Arabidopsis thaliana, encodes a beta-glucosidase.</title>
        <authorList>
            <person name="Thorlby G."/>
            <person name="Fourrier N."/>
            <person name="Warren G."/>
        </authorList>
    </citation>
    <scope>NUCLEOTIDE SEQUENCE [MRNA] (ISOFORM 1)</scope>
    <scope>FUNCTION</scope>
    <scope>INDUCTION</scope>
    <scope>TISSUE SPECIFICITY</scope>
    <scope>DISRUPTION PHENOTYPE</scope>
    <scope>MUTAGENESIS OF GLY-234</scope>
</reference>
<reference key="2">
    <citation type="journal article" date="2000" name="Nature">
        <title>Sequence and analysis of chromosome 3 of the plant Arabidopsis thaliana.</title>
        <authorList>
            <person name="Salanoubat M."/>
            <person name="Lemcke K."/>
            <person name="Rieger M."/>
            <person name="Ansorge W."/>
            <person name="Unseld M."/>
            <person name="Fartmann B."/>
            <person name="Valle G."/>
            <person name="Bloecker H."/>
            <person name="Perez-Alonso M."/>
            <person name="Obermaier B."/>
            <person name="Delseny M."/>
            <person name="Boutry M."/>
            <person name="Grivell L.A."/>
            <person name="Mache R."/>
            <person name="Puigdomenech P."/>
            <person name="De Simone V."/>
            <person name="Choisne N."/>
            <person name="Artiguenave F."/>
            <person name="Robert C."/>
            <person name="Brottier P."/>
            <person name="Wincker P."/>
            <person name="Cattolico L."/>
            <person name="Weissenbach J."/>
            <person name="Saurin W."/>
            <person name="Quetier F."/>
            <person name="Schaefer M."/>
            <person name="Mueller-Auer S."/>
            <person name="Gabel C."/>
            <person name="Fuchs M."/>
            <person name="Benes V."/>
            <person name="Wurmbach E."/>
            <person name="Drzonek H."/>
            <person name="Erfle H."/>
            <person name="Jordan N."/>
            <person name="Bangert S."/>
            <person name="Wiedelmann R."/>
            <person name="Kranz H."/>
            <person name="Voss H."/>
            <person name="Holland R."/>
            <person name="Brandt P."/>
            <person name="Nyakatura G."/>
            <person name="Vezzi A."/>
            <person name="D'Angelo M."/>
            <person name="Pallavicini A."/>
            <person name="Toppo S."/>
            <person name="Simionati B."/>
            <person name="Conrad A."/>
            <person name="Hornischer K."/>
            <person name="Kauer G."/>
            <person name="Loehnert T.-H."/>
            <person name="Nordsiek G."/>
            <person name="Reichelt J."/>
            <person name="Scharfe M."/>
            <person name="Schoen O."/>
            <person name="Bargues M."/>
            <person name="Terol J."/>
            <person name="Climent J."/>
            <person name="Navarro P."/>
            <person name="Collado C."/>
            <person name="Perez-Perez A."/>
            <person name="Ottenwaelder B."/>
            <person name="Duchemin D."/>
            <person name="Cooke R."/>
            <person name="Laudie M."/>
            <person name="Berger-Llauro C."/>
            <person name="Purnelle B."/>
            <person name="Masuy D."/>
            <person name="de Haan M."/>
            <person name="Maarse A.C."/>
            <person name="Alcaraz J.-P."/>
            <person name="Cottet A."/>
            <person name="Casacuberta E."/>
            <person name="Monfort A."/>
            <person name="Argiriou A."/>
            <person name="Flores M."/>
            <person name="Liguori R."/>
            <person name="Vitale D."/>
            <person name="Mannhaupt G."/>
            <person name="Haase D."/>
            <person name="Schoof H."/>
            <person name="Rudd S."/>
            <person name="Zaccaria P."/>
            <person name="Mewes H.-W."/>
            <person name="Mayer K.F.X."/>
            <person name="Kaul S."/>
            <person name="Town C.D."/>
            <person name="Koo H.L."/>
            <person name="Tallon L.J."/>
            <person name="Jenkins J."/>
            <person name="Rooney T."/>
            <person name="Rizzo M."/>
            <person name="Walts A."/>
            <person name="Utterback T."/>
            <person name="Fujii C.Y."/>
            <person name="Shea T.P."/>
            <person name="Creasy T.H."/>
            <person name="Haas B."/>
            <person name="Maiti R."/>
            <person name="Wu D."/>
            <person name="Peterson J."/>
            <person name="Van Aken S."/>
            <person name="Pai G."/>
            <person name="Militscher J."/>
            <person name="Sellers P."/>
            <person name="Gill J.E."/>
            <person name="Feldblyum T.V."/>
            <person name="Preuss D."/>
            <person name="Lin X."/>
            <person name="Nierman W.C."/>
            <person name="Salzberg S.L."/>
            <person name="White O."/>
            <person name="Venter J.C."/>
            <person name="Fraser C.M."/>
            <person name="Kaneko T."/>
            <person name="Nakamura Y."/>
            <person name="Sato S."/>
            <person name="Kato T."/>
            <person name="Asamizu E."/>
            <person name="Sasamoto S."/>
            <person name="Kimura T."/>
            <person name="Idesawa K."/>
            <person name="Kawashima K."/>
            <person name="Kishida Y."/>
            <person name="Kiyokawa C."/>
            <person name="Kohara M."/>
            <person name="Matsumoto M."/>
            <person name="Matsuno A."/>
            <person name="Muraki A."/>
            <person name="Nakayama S."/>
            <person name="Nakazaki N."/>
            <person name="Shinpo S."/>
            <person name="Takeuchi C."/>
            <person name="Wada T."/>
            <person name="Watanabe A."/>
            <person name="Yamada M."/>
            <person name="Yasuda M."/>
            <person name="Tabata S."/>
        </authorList>
    </citation>
    <scope>NUCLEOTIDE SEQUENCE [LARGE SCALE GENOMIC DNA]</scope>
    <source>
        <strain>cv. Columbia</strain>
    </source>
</reference>
<reference key="3">
    <citation type="journal article" date="2017" name="Plant J.">
        <title>Araport11: a complete reannotation of the Arabidopsis thaliana reference genome.</title>
        <authorList>
            <person name="Cheng C.Y."/>
            <person name="Krishnakumar V."/>
            <person name="Chan A.P."/>
            <person name="Thibaud-Nissen F."/>
            <person name="Schobel S."/>
            <person name="Town C.D."/>
        </authorList>
    </citation>
    <scope>GENOME REANNOTATION</scope>
    <source>
        <strain>cv. Columbia</strain>
    </source>
</reference>
<reference key="4">
    <citation type="journal article" date="2003" name="Science">
        <title>Empirical analysis of transcriptional activity in the Arabidopsis genome.</title>
        <authorList>
            <person name="Yamada K."/>
            <person name="Lim J."/>
            <person name="Dale J.M."/>
            <person name="Chen H."/>
            <person name="Shinn P."/>
            <person name="Palm C.J."/>
            <person name="Southwick A.M."/>
            <person name="Wu H.C."/>
            <person name="Kim C.J."/>
            <person name="Nguyen M."/>
            <person name="Pham P.K."/>
            <person name="Cheuk R.F."/>
            <person name="Karlin-Newmann G."/>
            <person name="Liu S.X."/>
            <person name="Lam B."/>
            <person name="Sakano H."/>
            <person name="Wu T."/>
            <person name="Yu G."/>
            <person name="Miranda M."/>
            <person name="Quach H.L."/>
            <person name="Tripp M."/>
            <person name="Chang C.H."/>
            <person name="Lee J.M."/>
            <person name="Toriumi M.J."/>
            <person name="Chan M.M."/>
            <person name="Tang C.C."/>
            <person name="Onodera C.S."/>
            <person name="Deng J.M."/>
            <person name="Akiyama K."/>
            <person name="Ansari Y."/>
            <person name="Arakawa T."/>
            <person name="Banh J."/>
            <person name="Banno F."/>
            <person name="Bowser L."/>
            <person name="Brooks S.Y."/>
            <person name="Carninci P."/>
            <person name="Chao Q."/>
            <person name="Choy N."/>
            <person name="Enju A."/>
            <person name="Goldsmith A.D."/>
            <person name="Gurjal M."/>
            <person name="Hansen N.F."/>
            <person name="Hayashizaki Y."/>
            <person name="Johnson-Hopson C."/>
            <person name="Hsuan V.W."/>
            <person name="Iida K."/>
            <person name="Karnes M."/>
            <person name="Khan S."/>
            <person name="Koesema E."/>
            <person name="Ishida J."/>
            <person name="Jiang P.X."/>
            <person name="Jones T."/>
            <person name="Kawai J."/>
            <person name="Kamiya A."/>
            <person name="Meyers C."/>
            <person name="Nakajima M."/>
            <person name="Narusaka M."/>
            <person name="Seki M."/>
            <person name="Sakurai T."/>
            <person name="Satou M."/>
            <person name="Tamse R."/>
            <person name="Vaysberg M."/>
            <person name="Wallender E.K."/>
            <person name="Wong C."/>
            <person name="Yamamura Y."/>
            <person name="Yuan S."/>
            <person name="Shinozaki K."/>
            <person name="Davis R.W."/>
            <person name="Theologis A."/>
            <person name="Ecker J.R."/>
        </authorList>
    </citation>
    <scope>NUCLEOTIDE SEQUENCE [LARGE SCALE MRNA] (ISOFORMS 1 AND 2)</scope>
    <source>
        <strain>cv. Columbia</strain>
    </source>
</reference>
<reference key="5">
    <citation type="submission" date="2002-03" db="EMBL/GenBank/DDBJ databases">
        <title>Full-length cDNA from Arabidopsis thaliana.</title>
        <authorList>
            <person name="Brover V.V."/>
            <person name="Troukhan M.E."/>
            <person name="Alexandrov N.A."/>
            <person name="Lu Y.-P."/>
            <person name="Flavell R.B."/>
            <person name="Feldmann K.A."/>
        </authorList>
    </citation>
    <scope>NUCLEOTIDE SEQUENCE [LARGE SCALE MRNA] (ISOFORM 1)</scope>
</reference>
<reference key="6">
    <citation type="journal article" date="2000" name="Mol. Gen. Genet.">
        <title>Molecular characterisation of a new mutant allele of the plastid phosphoglucomutase in Arabidopsis, and complementation of the mutant with the wild-type cDNA.</title>
        <authorList>
            <person name="Kofler H."/>
            <person name="Haeusler R.E."/>
            <person name="Schulz B."/>
            <person name="Groener F."/>
            <person name="Fluegge U.-I."/>
            <person name="Weber A."/>
        </authorList>
    </citation>
    <scope>NUCLEOTIDE SEQUENCE [MRNA] OF 7-622 (ISOFORM 1)</scope>
</reference>
<reference key="7">
    <citation type="journal article" date="2003" name="Plant Cell">
        <title>Disruption of the two digalactosyldiacylglycerol synthase genes DGD1 and DGD2 in Arabidopsis reveals the existence of an additional enzyme of galactolipid synthesis.</title>
        <authorList>
            <person name="Kelly A.A."/>
            <person name="Froehlich J.E."/>
            <person name="Doermann P."/>
        </authorList>
    </citation>
    <scope>FUNCTION</scope>
    <scope>SUBCELLULAR LOCATION</scope>
</reference>
<reference key="8">
    <citation type="journal article" date="2004" name="Plant Mol. Biol.">
        <title>Functional genomic analysis of Arabidopsis thaliana glycoside hydrolase family 1.</title>
        <authorList>
            <person name="Xu Z."/>
            <person name="Escamilla-Trevino L.L."/>
            <person name="Zeng L."/>
            <person name="Lalgondar M."/>
            <person name="Bevan D.R."/>
            <person name="Winkel B.S.J."/>
            <person name="Mohamed A."/>
            <person name="Cheng C.-L."/>
            <person name="Shih M.-C."/>
            <person name="Poulton J.E."/>
            <person name="Esen A."/>
        </authorList>
    </citation>
    <scope>GENE FAMILY</scope>
    <scope>NOMENCLATURE</scope>
</reference>
<reference key="9">
    <citation type="journal article" date="2005" name="J. Biol. Chem.">
        <title>Three enzyme systems for galactoglycerolipid biosynthesis are coordinately regulated in plants.</title>
        <authorList>
            <person name="Benning C."/>
            <person name="Ohta H."/>
        </authorList>
    </citation>
    <scope>REVIEW</scope>
</reference>
<reference key="10">
    <citation type="journal article" date="2008" name="Plant J.">
        <title>A role for SENSITIVE TO FREEZING2 in protecting chloroplasts against freeze-induced damage in Arabidopsis.</title>
        <authorList>
            <person name="Fourrier N."/>
            <person name="Bedard J."/>
            <person name="Lopez-Juez E."/>
            <person name="Barbrook A."/>
            <person name="Bowyer J."/>
            <person name="Jarvis P."/>
            <person name="Warren G."/>
            <person name="Thorlby G."/>
        </authorList>
    </citation>
    <scope>FUNCTION</scope>
    <scope>SUBCELLULAR LOCATION</scope>
    <scope>MUTAGENESIS OF GLU-267</scope>
</reference>
<reference key="11">
    <citation type="journal article" date="2010" name="Science">
        <title>Freezing tolerance in plants requires lipid remodeling at the outer chloroplast membrane.</title>
        <authorList>
            <person name="Moellering E.R."/>
            <person name="Muthan B."/>
            <person name="Benning C."/>
        </authorList>
    </citation>
    <scope>FUNCTION</scope>
    <scope>CATALYTIC ACTIVITY</scope>
    <scope>ACTIVITY REGULATION</scope>
    <scope>DISRUPTION PHENOTYPE</scope>
</reference>
<reference key="12">
    <citation type="journal article" date="2014" name="J. Biol. Chem.">
        <title>Structural determinants allowing transferase activity in SENSITIVE TO FREEZING 2, classified as a family I glycosyl hydrolase.</title>
        <authorList>
            <person name="Roston R.L."/>
            <person name="Wang K."/>
            <person name="Kuhn L.A."/>
            <person name="Benning C."/>
        </authorList>
    </citation>
    <scope>FUNCTION</scope>
    <scope>CATALYTIC ACTIVITY</scope>
    <scope>SUBCELLULAR LOCATION</scope>
    <scope>TOPOLOGY</scope>
    <scope>3D-STRUCTURE MODELING</scope>
    <scope>BIOPHYSICOCHEMICAL PROPERTIES</scope>
    <scope>MUTAGENESIS OF 1-MET--SER-27; GLU-267; ILE-270; MET-273; LEU-274 AND GLU-429</scope>
</reference>
<evidence type="ECO:0000250" key="1">
    <source>
        <dbReference type="UniProtKB" id="Q1XH05"/>
    </source>
</evidence>
<evidence type="ECO:0000250" key="2">
    <source>
        <dbReference type="UniProtKB" id="Q7XKV4"/>
    </source>
</evidence>
<evidence type="ECO:0000250" key="3">
    <source>
        <dbReference type="UniProtKB" id="Q7XSK0"/>
    </source>
</evidence>
<evidence type="ECO:0000250" key="4">
    <source>
        <dbReference type="UniProtKB" id="Q9SPP9"/>
    </source>
</evidence>
<evidence type="ECO:0000255" key="5"/>
<evidence type="ECO:0000269" key="6">
    <source>
    </source>
</evidence>
<evidence type="ECO:0000269" key="7">
    <source>
    </source>
</evidence>
<evidence type="ECO:0000269" key="8">
    <source>
    </source>
</evidence>
<evidence type="ECO:0000269" key="9">
    <source>
    </source>
</evidence>
<evidence type="ECO:0000269" key="10">
    <source>
    </source>
</evidence>
<evidence type="ECO:0000303" key="11">
    <source>
    </source>
</evidence>
<evidence type="ECO:0000303" key="12">
    <source>
    </source>
</evidence>
<evidence type="ECO:0000303" key="13">
    <source>
    </source>
</evidence>
<evidence type="ECO:0000305" key="14"/>
<evidence type="ECO:0000305" key="15">
    <source>
    </source>
</evidence>
<evidence type="ECO:0000312" key="16">
    <source>
        <dbReference type="Araport" id="AT3G06510"/>
    </source>
</evidence>
<evidence type="ECO:0000312" key="17">
    <source>
        <dbReference type="EMBL" id="AAG51335.1"/>
    </source>
</evidence>
<name>SFR2_ARATH</name>
<feature type="chain" id="PRO_0000390354" description="Galactolipid galactosyltransferase SFR2, chloroplastic">
    <location>
        <begin position="1"/>
        <end position="622"/>
    </location>
</feature>
<feature type="topological domain" description="Stromal">
    <location>
        <begin position="1"/>
        <end position="3"/>
    </location>
</feature>
<feature type="transmembrane region" description="Helical; Signal-anchor" evidence="5">
    <location>
        <begin position="4"/>
        <end position="24"/>
    </location>
</feature>
<feature type="topological domain" description="Cytoplasmic" evidence="10">
    <location>
        <begin position="25"/>
        <end position="622"/>
    </location>
</feature>
<feature type="active site" description="Proton donor" evidence="2">
    <location>
        <position position="267"/>
    </location>
</feature>
<feature type="active site" description="Nucleophile" evidence="2">
    <location>
        <position position="429"/>
    </location>
</feature>
<feature type="binding site" evidence="3">
    <location>
        <position position="222"/>
    </location>
    <ligand>
        <name>a beta-D-glucoside</name>
        <dbReference type="ChEBI" id="CHEBI:22798"/>
    </ligand>
</feature>
<feature type="binding site" evidence="3">
    <location>
        <begin position="266"/>
        <end position="267"/>
    </location>
    <ligand>
        <name>a beta-D-glucoside</name>
        <dbReference type="ChEBI" id="CHEBI:22798"/>
    </ligand>
</feature>
<feature type="binding site" evidence="3">
    <location>
        <position position="377"/>
    </location>
    <ligand>
        <name>a beta-D-glucoside</name>
        <dbReference type="ChEBI" id="CHEBI:22798"/>
    </ligand>
</feature>
<feature type="binding site" evidence="4">
    <location>
        <position position="429"/>
    </location>
    <ligand>
        <name>a beta-D-glucoside</name>
        <dbReference type="ChEBI" id="CHEBI:22798"/>
    </ligand>
</feature>
<feature type="binding site" evidence="3">
    <location>
        <position position="467"/>
    </location>
    <ligand>
        <name>a beta-D-glucoside</name>
        <dbReference type="ChEBI" id="CHEBI:22798"/>
    </ligand>
</feature>
<feature type="binding site" evidence="3">
    <location>
        <begin position="474"/>
        <end position="475"/>
    </location>
    <ligand>
        <name>a beta-D-glucoside</name>
        <dbReference type="ChEBI" id="CHEBI:22798"/>
    </ligand>
</feature>
<feature type="binding site" evidence="1">
    <location>
        <position position="483"/>
    </location>
    <ligand>
        <name>a beta-D-glucoside</name>
        <dbReference type="ChEBI" id="CHEBI:22798"/>
    </ligand>
</feature>
<feature type="splice variant" id="VSP_038516" description="In isoform 2." evidence="11">
    <original>Q</original>
    <variation>QVRELQVKIAIRSQILINNIAFSRISMLESDSRNQ</variation>
    <location>
        <position position="379"/>
    </location>
</feature>
<feature type="mutagenesis site" description="No effect on transferase activity." evidence="10">
    <location>
        <begin position="1"/>
        <end position="27"/>
    </location>
</feature>
<feature type="mutagenesis site" description="In sfr2-1; no effect on glucosidase activity, but loss of freezing tolerance." evidence="7">
    <original>G</original>
    <variation>D</variation>
    <location>
        <position position="234"/>
    </location>
</feature>
<feature type="mutagenesis site" description="Loss of transferase activity." evidence="10">
    <original>E</original>
    <variation>A</variation>
    <location>
        <position position="267"/>
    </location>
</feature>
<feature type="mutagenesis site" description="Loss of catalytic activity and freezing tolerance." evidence="8">
    <original>E</original>
    <variation>G</variation>
    <location>
        <position position="267"/>
    </location>
</feature>
<feature type="mutagenesis site" description="Decreased transferase activity. Total loss of transferase activity; when associated with A-273 and A-274." evidence="10">
    <original>I</original>
    <variation>A</variation>
    <location>
        <position position="270"/>
    </location>
</feature>
<feature type="mutagenesis site" description="No effect on transferase activity. Total loss of transferase activity; when associated with A-270 and A-274." evidence="10">
    <original>M</original>
    <variation>A</variation>
    <location>
        <position position="273"/>
    </location>
</feature>
<feature type="mutagenesis site" description="Decreased transferase activity. Total loss of transferase activity; when associated with A-270 and A-273." evidence="10">
    <original>L</original>
    <variation>A</variation>
    <location>
        <position position="274"/>
    </location>
</feature>
<feature type="mutagenesis site" description="Loss of transferase activity." evidence="10">
    <original>E</original>
    <variation>A</variation>
    <location>
        <position position="429"/>
    </location>
</feature>
<feature type="sequence conflict" description="In Ref. 6; AAF23823." evidence="14" ref="6">
    <original>L</original>
    <variation>I</variation>
    <location>
        <position position="7"/>
    </location>
</feature>
<feature type="sequence conflict" description="In Ref. 4; AAL31914." evidence="14" ref="4">
    <original>P</original>
    <variation>H</variation>
    <location>
        <position position="69"/>
    </location>
</feature>
<feature type="sequence conflict" description="In Ref. 6; AAF23823." evidence="14" ref="6">
    <original>C</original>
    <variation>W</variation>
    <location>
        <position position="89"/>
    </location>
</feature>
<feature type="sequence conflict" description="In Ref. 6; AAF23823." evidence="14" ref="6">
    <original>A</original>
    <variation>S</variation>
    <location>
        <position position="94"/>
    </location>
</feature>
<feature type="sequence conflict" description="In Ref. 1; CAD36514." evidence="14" ref="1">
    <original>MP</original>
    <variation>KH</variation>
    <location>
        <begin position="182"/>
        <end position="183"/>
    </location>
</feature>
<feature type="sequence conflict" description="In Ref. 5; AAM65250." evidence="14" ref="5">
    <original>W</original>
    <variation>C</variation>
    <location>
        <position position="204"/>
    </location>
</feature>
<feature type="sequence conflict" description="In Ref. 5; AAM65250." evidence="14" ref="5">
    <original>G</original>
    <variation>D</variation>
    <location>
        <position position="233"/>
    </location>
</feature>
<feature type="sequence conflict" description="In Ref. 1; CAD36513." evidence="14" ref="1">
    <original>G</original>
    <variation>D</variation>
    <location>
        <position position="234"/>
    </location>
</feature>
<feature type="sequence conflict" description="In Ref. 6; AAF23823." evidence="14" ref="6">
    <original>RDWRFGHY</original>
    <variation>TRLAVGPLN</variation>
    <location>
        <begin position="564"/>
        <end position="571"/>
    </location>
</feature>